<name>HEM1_PSEE4</name>
<keyword id="KW-0521">NADP</keyword>
<keyword id="KW-0560">Oxidoreductase</keyword>
<keyword id="KW-0627">Porphyrin biosynthesis</keyword>
<gene>
    <name evidence="1" type="primary">hemA</name>
    <name type="ordered locus">PSEEN0875</name>
</gene>
<dbReference type="EC" id="1.2.1.70" evidence="1"/>
<dbReference type="EMBL" id="CT573326">
    <property type="protein sequence ID" value="CAK13783.1"/>
    <property type="molecule type" value="Genomic_DNA"/>
</dbReference>
<dbReference type="RefSeq" id="WP_011532210.1">
    <property type="nucleotide sequence ID" value="NC_008027.1"/>
</dbReference>
<dbReference type="SMR" id="Q1IEX2"/>
<dbReference type="STRING" id="384676.PSEEN0875"/>
<dbReference type="GeneID" id="32804176"/>
<dbReference type="KEGG" id="pen:PSEEN0875"/>
<dbReference type="eggNOG" id="COG0373">
    <property type="taxonomic scope" value="Bacteria"/>
</dbReference>
<dbReference type="HOGENOM" id="CLU_035113_2_2_6"/>
<dbReference type="OrthoDB" id="110209at2"/>
<dbReference type="UniPathway" id="UPA00251">
    <property type="reaction ID" value="UER00316"/>
</dbReference>
<dbReference type="Proteomes" id="UP000000658">
    <property type="component" value="Chromosome"/>
</dbReference>
<dbReference type="GO" id="GO:0008883">
    <property type="term" value="F:glutamyl-tRNA reductase activity"/>
    <property type="evidence" value="ECO:0007669"/>
    <property type="project" value="UniProtKB-UniRule"/>
</dbReference>
<dbReference type="GO" id="GO:0050661">
    <property type="term" value="F:NADP binding"/>
    <property type="evidence" value="ECO:0007669"/>
    <property type="project" value="InterPro"/>
</dbReference>
<dbReference type="GO" id="GO:0019353">
    <property type="term" value="P:protoporphyrinogen IX biosynthetic process from glutamate"/>
    <property type="evidence" value="ECO:0007669"/>
    <property type="project" value="TreeGrafter"/>
</dbReference>
<dbReference type="CDD" id="cd05213">
    <property type="entry name" value="NAD_bind_Glutamyl_tRNA_reduct"/>
    <property type="match status" value="1"/>
</dbReference>
<dbReference type="FunFam" id="3.30.460.30:FF:000001">
    <property type="entry name" value="Glutamyl-tRNA reductase"/>
    <property type="match status" value="1"/>
</dbReference>
<dbReference type="FunFam" id="3.40.50.720:FF:000031">
    <property type="entry name" value="Glutamyl-tRNA reductase"/>
    <property type="match status" value="1"/>
</dbReference>
<dbReference type="Gene3D" id="3.30.460.30">
    <property type="entry name" value="Glutamyl-tRNA reductase, N-terminal domain"/>
    <property type="match status" value="1"/>
</dbReference>
<dbReference type="Gene3D" id="3.40.50.720">
    <property type="entry name" value="NAD(P)-binding Rossmann-like Domain"/>
    <property type="match status" value="1"/>
</dbReference>
<dbReference type="HAMAP" id="MF_00087">
    <property type="entry name" value="Glu_tRNA_reductase"/>
    <property type="match status" value="1"/>
</dbReference>
<dbReference type="InterPro" id="IPR000343">
    <property type="entry name" value="4pyrrol_synth_GluRdtase"/>
</dbReference>
<dbReference type="InterPro" id="IPR015896">
    <property type="entry name" value="4pyrrol_synth_GluRdtase_dimer"/>
</dbReference>
<dbReference type="InterPro" id="IPR015895">
    <property type="entry name" value="4pyrrol_synth_GluRdtase_N"/>
</dbReference>
<dbReference type="InterPro" id="IPR018214">
    <property type="entry name" value="GluRdtase_CS"/>
</dbReference>
<dbReference type="InterPro" id="IPR036453">
    <property type="entry name" value="GluRdtase_dimer_dom_sf"/>
</dbReference>
<dbReference type="InterPro" id="IPR036343">
    <property type="entry name" value="GluRdtase_N_sf"/>
</dbReference>
<dbReference type="InterPro" id="IPR036291">
    <property type="entry name" value="NAD(P)-bd_dom_sf"/>
</dbReference>
<dbReference type="InterPro" id="IPR006151">
    <property type="entry name" value="Shikm_DH/Glu-tRNA_Rdtase"/>
</dbReference>
<dbReference type="NCBIfam" id="TIGR01035">
    <property type="entry name" value="hemA"/>
    <property type="match status" value="1"/>
</dbReference>
<dbReference type="PANTHER" id="PTHR43013">
    <property type="entry name" value="GLUTAMYL-TRNA REDUCTASE"/>
    <property type="match status" value="1"/>
</dbReference>
<dbReference type="PANTHER" id="PTHR43013:SF1">
    <property type="entry name" value="GLUTAMYL-TRNA REDUCTASE"/>
    <property type="match status" value="1"/>
</dbReference>
<dbReference type="Pfam" id="PF00745">
    <property type="entry name" value="GlutR_dimer"/>
    <property type="match status" value="1"/>
</dbReference>
<dbReference type="Pfam" id="PF05201">
    <property type="entry name" value="GlutR_N"/>
    <property type="match status" value="1"/>
</dbReference>
<dbReference type="Pfam" id="PF01488">
    <property type="entry name" value="Shikimate_DH"/>
    <property type="match status" value="1"/>
</dbReference>
<dbReference type="PIRSF" id="PIRSF000445">
    <property type="entry name" value="4pyrrol_synth_GluRdtase"/>
    <property type="match status" value="1"/>
</dbReference>
<dbReference type="SUPFAM" id="SSF69742">
    <property type="entry name" value="Glutamyl tRNA-reductase catalytic, N-terminal domain"/>
    <property type="match status" value="1"/>
</dbReference>
<dbReference type="SUPFAM" id="SSF69075">
    <property type="entry name" value="Glutamyl tRNA-reductase dimerization domain"/>
    <property type="match status" value="1"/>
</dbReference>
<dbReference type="SUPFAM" id="SSF51735">
    <property type="entry name" value="NAD(P)-binding Rossmann-fold domains"/>
    <property type="match status" value="1"/>
</dbReference>
<dbReference type="PROSITE" id="PS00747">
    <property type="entry name" value="GLUTR"/>
    <property type="match status" value="1"/>
</dbReference>
<organism>
    <name type="scientific">Pseudomonas entomophila (strain L48)</name>
    <dbReference type="NCBI Taxonomy" id="384676"/>
    <lineage>
        <taxon>Bacteria</taxon>
        <taxon>Pseudomonadati</taxon>
        <taxon>Pseudomonadota</taxon>
        <taxon>Gammaproteobacteria</taxon>
        <taxon>Pseudomonadales</taxon>
        <taxon>Pseudomonadaceae</taxon>
        <taxon>Pseudomonas</taxon>
    </lineage>
</organism>
<comment type="function">
    <text evidence="1">Catalyzes the NADPH-dependent reduction of glutamyl-tRNA(Glu) to glutamate 1-semialdehyde (GSA).</text>
</comment>
<comment type="catalytic activity">
    <reaction evidence="1">
        <text>(S)-4-amino-5-oxopentanoate + tRNA(Glu) + NADP(+) = L-glutamyl-tRNA(Glu) + NADPH + H(+)</text>
        <dbReference type="Rhea" id="RHEA:12344"/>
        <dbReference type="Rhea" id="RHEA-COMP:9663"/>
        <dbReference type="Rhea" id="RHEA-COMP:9680"/>
        <dbReference type="ChEBI" id="CHEBI:15378"/>
        <dbReference type="ChEBI" id="CHEBI:57501"/>
        <dbReference type="ChEBI" id="CHEBI:57783"/>
        <dbReference type="ChEBI" id="CHEBI:58349"/>
        <dbReference type="ChEBI" id="CHEBI:78442"/>
        <dbReference type="ChEBI" id="CHEBI:78520"/>
        <dbReference type="EC" id="1.2.1.70"/>
    </reaction>
</comment>
<comment type="pathway">
    <text evidence="1">Porphyrin-containing compound metabolism; protoporphyrin-IX biosynthesis; 5-aminolevulinate from L-glutamyl-tRNA(Glu): step 1/2.</text>
</comment>
<comment type="subunit">
    <text evidence="1">Homodimer.</text>
</comment>
<comment type="domain">
    <text evidence="1">Possesses an unusual extended V-shaped dimeric structure with each monomer consisting of three distinct domains arranged along a curved 'spinal' alpha-helix. The N-terminal catalytic domain specifically recognizes the glutamate moiety of the substrate. The second domain is the NADPH-binding domain, and the third C-terminal domain is responsible for dimerization.</text>
</comment>
<comment type="miscellaneous">
    <text evidence="1">During catalysis, the active site Cys acts as a nucleophile attacking the alpha-carbonyl group of tRNA-bound glutamate with the formation of a thioester intermediate between enzyme and glutamate, and the concomitant release of tRNA(Glu). The thioester intermediate is finally reduced by direct hydride transfer from NADPH, to form the product GSA.</text>
</comment>
<comment type="similarity">
    <text evidence="1">Belongs to the glutamyl-tRNA reductase family.</text>
</comment>
<accession>Q1IEX2</accession>
<feature type="chain" id="PRO_1000004671" description="Glutamyl-tRNA reductase">
    <location>
        <begin position="1"/>
        <end position="425"/>
    </location>
</feature>
<feature type="active site" description="Nucleophile" evidence="1">
    <location>
        <position position="50"/>
    </location>
</feature>
<feature type="binding site" evidence="1">
    <location>
        <begin position="49"/>
        <end position="52"/>
    </location>
    <ligand>
        <name>substrate</name>
    </ligand>
</feature>
<feature type="binding site" evidence="1">
    <location>
        <position position="107"/>
    </location>
    <ligand>
        <name>substrate</name>
    </ligand>
</feature>
<feature type="binding site" evidence="1">
    <location>
        <begin position="112"/>
        <end position="114"/>
    </location>
    <ligand>
        <name>substrate</name>
    </ligand>
</feature>
<feature type="binding site" evidence="1">
    <location>
        <position position="118"/>
    </location>
    <ligand>
        <name>substrate</name>
    </ligand>
</feature>
<feature type="binding site" evidence="1">
    <location>
        <begin position="187"/>
        <end position="192"/>
    </location>
    <ligand>
        <name>NADP(+)</name>
        <dbReference type="ChEBI" id="CHEBI:58349"/>
    </ligand>
</feature>
<feature type="site" description="Important for activity" evidence="1">
    <location>
        <position position="97"/>
    </location>
</feature>
<protein>
    <recommendedName>
        <fullName evidence="1">Glutamyl-tRNA reductase</fullName>
        <shortName evidence="1">GluTR</shortName>
        <ecNumber evidence="1">1.2.1.70</ecNumber>
    </recommendedName>
</protein>
<evidence type="ECO:0000255" key="1">
    <source>
        <dbReference type="HAMAP-Rule" id="MF_00087"/>
    </source>
</evidence>
<sequence length="425" mass="46312">MAFLALGINHKTASVDVRERVAFTPEQLVDALQQLCRLTASREAAILSTCNRSELYIEQDHIAADAVLQWLADYHQLSLDELRASAYIHEEHDAVRHMMRVASGLDSLVLGEPQILGQMKSAYAVAREAGTVGPLLGRLFQATFSAAKQVRTDTAIGENPVSVAFAAVSLAKQIFSDLGRSQALLIGAGETITLVARHLHEQGVRRIVVANRTLERASILAEQFGAHAVLLADIPQELANSDIVISSTASQLPILGKGAVESALKQRRHKPIFMVDIAVPRDIEPQVGELDDVYLYTVDDLHEVVAENLKSRQGAAQAAEELVSAGADDFMVRLRELAAVDVLKAYRQQSERLRDEELQKALRLLGNGGNPEDVLMQLARGLTNKLLHAPSVQLKKLSAEGRLDALAMAQELFALHEGSTDKTPQ</sequence>
<reference key="1">
    <citation type="journal article" date="2006" name="Nat. Biotechnol.">
        <title>Complete genome sequence of the entomopathogenic and metabolically versatile soil bacterium Pseudomonas entomophila.</title>
        <authorList>
            <person name="Vodovar N."/>
            <person name="Vallenet D."/>
            <person name="Cruveiller S."/>
            <person name="Rouy Z."/>
            <person name="Barbe V."/>
            <person name="Acosta C."/>
            <person name="Cattolico L."/>
            <person name="Jubin C."/>
            <person name="Lajus A."/>
            <person name="Segurens B."/>
            <person name="Vacherie B."/>
            <person name="Wincker P."/>
            <person name="Weissenbach J."/>
            <person name="Lemaitre B."/>
            <person name="Medigue C."/>
            <person name="Boccard F."/>
        </authorList>
    </citation>
    <scope>NUCLEOTIDE SEQUENCE [LARGE SCALE GENOMIC DNA]</scope>
    <source>
        <strain>L48</strain>
    </source>
</reference>
<proteinExistence type="inferred from homology"/>